<reference key="1">
    <citation type="journal article" date="1993" name="Yeast">
        <title>Sequencing and functional analysis of a 32,560 bp segment on the left arm of yeast chromosome II. Identification of 26 open reading frames, including the KIP1 and SEC17 genes.</title>
        <authorList>
            <person name="Scherens B."/>
            <person name="el Bakkoury M."/>
            <person name="Vierendeels F."/>
            <person name="Dubois E."/>
            <person name="Messenguy F."/>
        </authorList>
    </citation>
    <scope>NUCLEOTIDE SEQUENCE [GENOMIC DNA]</scope>
    <source>
        <strain>ATCC 204508 / S288c</strain>
    </source>
</reference>
<reference key="2">
    <citation type="journal article" date="1994" name="EMBO J.">
        <title>Complete DNA sequence of yeast chromosome II.</title>
        <authorList>
            <person name="Feldmann H."/>
            <person name="Aigle M."/>
            <person name="Aljinovic G."/>
            <person name="Andre B."/>
            <person name="Baclet M.C."/>
            <person name="Barthe C."/>
            <person name="Baur A."/>
            <person name="Becam A.-M."/>
            <person name="Biteau N."/>
            <person name="Boles E."/>
            <person name="Brandt T."/>
            <person name="Brendel M."/>
            <person name="Brueckner M."/>
            <person name="Bussereau F."/>
            <person name="Christiansen C."/>
            <person name="Contreras R."/>
            <person name="Crouzet M."/>
            <person name="Cziepluch C."/>
            <person name="Demolis N."/>
            <person name="Delaveau T."/>
            <person name="Doignon F."/>
            <person name="Domdey H."/>
            <person name="Duesterhus S."/>
            <person name="Dubois E."/>
            <person name="Dujon B."/>
            <person name="El Bakkoury M."/>
            <person name="Entian K.-D."/>
            <person name="Feuermann M."/>
            <person name="Fiers W."/>
            <person name="Fobo G.M."/>
            <person name="Fritz C."/>
            <person name="Gassenhuber J."/>
            <person name="Glansdorff N."/>
            <person name="Goffeau A."/>
            <person name="Grivell L.A."/>
            <person name="de Haan M."/>
            <person name="Hein C."/>
            <person name="Herbert C.J."/>
            <person name="Hollenberg C.P."/>
            <person name="Holmstroem K."/>
            <person name="Jacq C."/>
            <person name="Jacquet M."/>
            <person name="Jauniaux J.-C."/>
            <person name="Jonniaux J.-L."/>
            <person name="Kallesoee T."/>
            <person name="Kiesau P."/>
            <person name="Kirchrath L."/>
            <person name="Koetter P."/>
            <person name="Korol S."/>
            <person name="Liebl S."/>
            <person name="Logghe M."/>
            <person name="Lohan A.J.E."/>
            <person name="Louis E.J."/>
            <person name="Li Z.Y."/>
            <person name="Maat M.J."/>
            <person name="Mallet L."/>
            <person name="Mannhaupt G."/>
            <person name="Messenguy F."/>
            <person name="Miosga T."/>
            <person name="Molemans F."/>
            <person name="Mueller S."/>
            <person name="Nasr F."/>
            <person name="Obermaier B."/>
            <person name="Perea J."/>
            <person name="Pierard A."/>
            <person name="Piravandi E."/>
            <person name="Pohl F.M."/>
            <person name="Pohl T.M."/>
            <person name="Potier S."/>
            <person name="Proft M."/>
            <person name="Purnelle B."/>
            <person name="Ramezani Rad M."/>
            <person name="Rieger M."/>
            <person name="Rose M."/>
            <person name="Schaaff-Gerstenschlaeger I."/>
            <person name="Scherens B."/>
            <person name="Schwarzlose C."/>
            <person name="Skala J."/>
            <person name="Slonimski P.P."/>
            <person name="Smits P.H.M."/>
            <person name="Souciet J.-L."/>
            <person name="Steensma H.Y."/>
            <person name="Stucka R."/>
            <person name="Urrestarazu L.A."/>
            <person name="van der Aart Q.J.M."/>
            <person name="Van Dyck L."/>
            <person name="Vassarotti A."/>
            <person name="Vetter I."/>
            <person name="Vierendeels F."/>
            <person name="Vissers S."/>
            <person name="Wagner G."/>
            <person name="de Wergifosse P."/>
            <person name="Wolfe K.H."/>
            <person name="Zagulski M."/>
            <person name="Zimmermann F.K."/>
            <person name="Mewes H.-W."/>
            <person name="Kleine K."/>
        </authorList>
    </citation>
    <scope>NUCLEOTIDE SEQUENCE [LARGE SCALE GENOMIC DNA]</scope>
    <source>
        <strain>ATCC 204508 / S288c</strain>
    </source>
</reference>
<reference key="3">
    <citation type="journal article" date="2014" name="G3 (Bethesda)">
        <title>The reference genome sequence of Saccharomyces cerevisiae: Then and now.</title>
        <authorList>
            <person name="Engel S.R."/>
            <person name="Dietrich F.S."/>
            <person name="Fisk D.G."/>
            <person name="Binkley G."/>
            <person name="Balakrishnan R."/>
            <person name="Costanzo M.C."/>
            <person name="Dwight S.S."/>
            <person name="Hitz B.C."/>
            <person name="Karra K."/>
            <person name="Nash R.S."/>
            <person name="Weng S."/>
            <person name="Wong E.D."/>
            <person name="Lloyd P."/>
            <person name="Skrzypek M.S."/>
            <person name="Miyasato S.R."/>
            <person name="Simison M."/>
            <person name="Cherry J.M."/>
        </authorList>
    </citation>
    <scope>GENOME REANNOTATION</scope>
    <source>
        <strain>ATCC 204508 / S288c</strain>
    </source>
</reference>
<reference key="4">
    <citation type="journal article" date="2007" name="Genome Res.">
        <title>Approaching a complete repository of sequence-verified protein-encoding clones for Saccharomyces cerevisiae.</title>
        <authorList>
            <person name="Hu Y."/>
            <person name="Rolfs A."/>
            <person name="Bhullar B."/>
            <person name="Murthy T.V.S."/>
            <person name="Zhu C."/>
            <person name="Berger M.F."/>
            <person name="Camargo A.A."/>
            <person name="Kelley F."/>
            <person name="McCarron S."/>
            <person name="Jepson D."/>
            <person name="Richardson A."/>
            <person name="Raphael J."/>
            <person name="Moreira D."/>
            <person name="Taycher E."/>
            <person name="Zuo D."/>
            <person name="Mohr S."/>
            <person name="Kane M.F."/>
            <person name="Williamson J."/>
            <person name="Simpson A.J.G."/>
            <person name="Bulyk M.L."/>
            <person name="Harlow E."/>
            <person name="Marsischky G."/>
            <person name="Kolodner R.D."/>
            <person name="LaBaer J."/>
        </authorList>
    </citation>
    <scope>NUCLEOTIDE SEQUENCE [GENOMIC DNA]</scope>
    <source>
        <strain>ATCC 204508 / S288c</strain>
    </source>
</reference>
<reference key="5">
    <citation type="journal article" date="2003" name="Nature">
        <title>Global analysis of protein localization in budding yeast.</title>
        <authorList>
            <person name="Huh W.-K."/>
            <person name="Falvo J.V."/>
            <person name="Gerke L.C."/>
            <person name="Carroll A.S."/>
            <person name="Howson R.W."/>
            <person name="Weissman J.S."/>
            <person name="O'Shea E.K."/>
        </authorList>
    </citation>
    <scope>SUBCELLULAR LOCATION [LARGE SCALE ANALYSIS]</scope>
</reference>
<reference key="6">
    <citation type="journal article" date="2003" name="Nature">
        <title>Global analysis of protein expression in yeast.</title>
        <authorList>
            <person name="Ghaemmaghami S."/>
            <person name="Huh W.-K."/>
            <person name="Bower K."/>
            <person name="Howson R.W."/>
            <person name="Belle A."/>
            <person name="Dephoure N."/>
            <person name="O'Shea E.K."/>
            <person name="Weissman J.S."/>
        </authorList>
    </citation>
    <scope>LEVEL OF PROTEIN EXPRESSION [LARGE SCALE ANALYSIS]</scope>
</reference>
<reference key="7">
    <citation type="journal article" date="2005" name="J. Biol. Chem.">
        <title>Search for apoptotic nucleases in yeast: role of Tat-D nuclease in apoptotic DNA degradation.</title>
        <authorList>
            <person name="Qiu J."/>
            <person name="Yoon J.H."/>
            <person name="Shen B."/>
        </authorList>
    </citation>
    <scope>FUNCTION</scope>
    <scope>COFACTOR</scope>
    <scope>BIOPHYSICOCHEMICAL PROPERTIES</scope>
    <scope>MUTAGENESIS OF GLU-185; GLU-325 AND ASP-327</scope>
</reference>
<sequence>MWGILLKSSNKSCSRLWKPILTQYYSMTSTATDSPLKYYDIGLNLTDPMFHGIYNGKQYHPADYVKLLERAAQRHVKNALVTGSSIAESQSAIELVSSVKDLSPLKLYHTIGVHPCCVNEFADASQGDKASASIDNPSMDEAYNESLYAKVISNPSFAQGKLKELYDLMNQQAKPHDTSFRSIGEIGLDYDRFHYSSKEMQKVFFEEQLKISCLNDKLSSYPLFLHMRSACDDFVQILERFIAGFTDERDTFQLQKLGASSSSGFYKFHPDRKLVVHSFTGSAIDLQKLLNLSPNIFIGVNGCSLRTEENLAVVKQIPTERLLLETDAPWCEIKRTHASFQYLAKYQEVRDFEYPAFKSVKKNKLADKLNAEELYMVKGRNEPCNMEQVAIVVSEVKDVDLATLIDTTWKTTCKIFGE</sequence>
<dbReference type="EC" id="3.1.21.-"/>
<dbReference type="EMBL" id="Z23261">
    <property type="protein sequence ID" value="CAA80792.1"/>
    <property type="molecule type" value="Genomic_DNA"/>
</dbReference>
<dbReference type="EMBL" id="Z35816">
    <property type="protein sequence ID" value="CAA84875.1"/>
    <property type="molecule type" value="Genomic_DNA"/>
</dbReference>
<dbReference type="EMBL" id="AY692626">
    <property type="protein sequence ID" value="AAT92645.1"/>
    <property type="molecule type" value="Genomic_DNA"/>
</dbReference>
<dbReference type="EMBL" id="BK006936">
    <property type="protein sequence ID" value="DAA07065.1"/>
    <property type="molecule type" value="Genomic_DNA"/>
</dbReference>
<dbReference type="PIR" id="S39833">
    <property type="entry name" value="S39833"/>
</dbReference>
<dbReference type="RefSeq" id="NP_009498.1">
    <property type="nucleotide sequence ID" value="NM_001178295.1"/>
</dbReference>
<dbReference type="SMR" id="P34220"/>
<dbReference type="BioGRID" id="32644">
    <property type="interactions" value="73"/>
</dbReference>
<dbReference type="FunCoup" id="P34220">
    <property type="interactions" value="710"/>
</dbReference>
<dbReference type="IntAct" id="P34220">
    <property type="interactions" value="2"/>
</dbReference>
<dbReference type="MINT" id="P34220"/>
<dbReference type="STRING" id="4932.YBL055C"/>
<dbReference type="iPTMnet" id="P34220"/>
<dbReference type="PaxDb" id="4932-YBL055C"/>
<dbReference type="PeptideAtlas" id="P34220"/>
<dbReference type="TopDownProteomics" id="P34220"/>
<dbReference type="EnsemblFungi" id="YBL055C_mRNA">
    <property type="protein sequence ID" value="YBL055C"/>
    <property type="gene ID" value="YBL055C"/>
</dbReference>
<dbReference type="GeneID" id="852225"/>
<dbReference type="KEGG" id="sce:YBL055C"/>
<dbReference type="AGR" id="SGD:S000000151"/>
<dbReference type="SGD" id="S000000151">
    <property type="gene designation" value="YBL055C"/>
</dbReference>
<dbReference type="VEuPathDB" id="FungiDB:YBL055C"/>
<dbReference type="eggNOG" id="KOG3020">
    <property type="taxonomic scope" value="Eukaryota"/>
</dbReference>
<dbReference type="GeneTree" id="ENSGT00940000156272"/>
<dbReference type="HOGENOM" id="CLU_031506_1_0_1"/>
<dbReference type="InParanoid" id="P34220"/>
<dbReference type="OMA" id="CSDIFFE"/>
<dbReference type="OrthoDB" id="6079689at2759"/>
<dbReference type="BioCyc" id="YEAST:G3O-28953-MONOMER"/>
<dbReference type="BioGRID-ORCS" id="852225">
    <property type="hits" value="8 hits in 10 CRISPR screens"/>
</dbReference>
<dbReference type="PRO" id="PR:P34220"/>
<dbReference type="Proteomes" id="UP000002311">
    <property type="component" value="Chromosome II"/>
</dbReference>
<dbReference type="RNAct" id="P34220">
    <property type="molecule type" value="protein"/>
</dbReference>
<dbReference type="GO" id="GO:0005737">
    <property type="term" value="C:cytoplasm"/>
    <property type="evidence" value="ECO:0007005"/>
    <property type="project" value="SGD"/>
</dbReference>
<dbReference type="GO" id="GO:0008296">
    <property type="term" value="F:3'-5'-DNA exonuclease activity"/>
    <property type="evidence" value="ECO:0000314"/>
    <property type="project" value="SGD"/>
</dbReference>
<dbReference type="GO" id="GO:0004519">
    <property type="term" value="F:endonuclease activity"/>
    <property type="evidence" value="ECO:0000314"/>
    <property type="project" value="SGD"/>
</dbReference>
<dbReference type="GO" id="GO:0046872">
    <property type="term" value="F:metal ion binding"/>
    <property type="evidence" value="ECO:0007669"/>
    <property type="project" value="UniProtKB-KW"/>
</dbReference>
<dbReference type="GO" id="GO:0006309">
    <property type="term" value="P:apoptotic DNA fragmentation"/>
    <property type="evidence" value="ECO:0000315"/>
    <property type="project" value="SGD"/>
</dbReference>
<dbReference type="GO" id="GO:0034599">
    <property type="term" value="P:cellular response to oxidative stress"/>
    <property type="evidence" value="ECO:0000315"/>
    <property type="project" value="SGD"/>
</dbReference>
<dbReference type="CDD" id="cd01310">
    <property type="entry name" value="TatD_DNAse"/>
    <property type="match status" value="1"/>
</dbReference>
<dbReference type="FunFam" id="3.20.20.140:FF:000119">
    <property type="entry name" value="Deoxyribonuclease Tat-D"/>
    <property type="match status" value="1"/>
</dbReference>
<dbReference type="Gene3D" id="3.20.20.140">
    <property type="entry name" value="Metal-dependent hydrolases"/>
    <property type="match status" value="1"/>
</dbReference>
<dbReference type="InterPro" id="IPR018228">
    <property type="entry name" value="DNase_TatD-rel_CS"/>
</dbReference>
<dbReference type="InterPro" id="IPR032466">
    <property type="entry name" value="Metal_Hydrolase"/>
</dbReference>
<dbReference type="InterPro" id="IPR001130">
    <property type="entry name" value="TatD-like"/>
</dbReference>
<dbReference type="InterPro" id="IPR050891">
    <property type="entry name" value="TatD-type_Hydrolase"/>
</dbReference>
<dbReference type="PANTHER" id="PTHR10060:SF15">
    <property type="entry name" value="DEOXYRIBONUCLEASE TATDN1"/>
    <property type="match status" value="1"/>
</dbReference>
<dbReference type="PANTHER" id="PTHR10060">
    <property type="entry name" value="TATD FAMILY DEOXYRIBONUCLEASE"/>
    <property type="match status" value="1"/>
</dbReference>
<dbReference type="Pfam" id="PF01026">
    <property type="entry name" value="TatD_DNase"/>
    <property type="match status" value="1"/>
</dbReference>
<dbReference type="SUPFAM" id="SSF51556">
    <property type="entry name" value="Metallo-dependent hydrolases"/>
    <property type="match status" value="1"/>
</dbReference>
<dbReference type="PROSITE" id="PS01090">
    <property type="entry name" value="TATD_2"/>
    <property type="match status" value="1"/>
</dbReference>
<dbReference type="PROSITE" id="PS01091">
    <property type="entry name" value="TATD_3"/>
    <property type="match status" value="1"/>
</dbReference>
<protein>
    <recommendedName>
        <fullName>Deoxyribonuclease Tat-D</fullName>
        <ecNumber>3.1.21.-</ecNumber>
    </recommendedName>
</protein>
<gene>
    <name type="ordered locus">YBL055C</name>
    <name type="ORF">YBL0511</name>
    <name type="ORF">YBL0512</name>
</gene>
<proteinExistence type="evidence at protein level"/>
<feature type="chain" id="PRO_0000201994" description="Deoxyribonuclease Tat-D">
    <location>
        <begin position="1"/>
        <end position="418"/>
    </location>
</feature>
<feature type="binding site" evidence="1">
    <location>
        <position position="185"/>
    </location>
    <ligand>
        <name>a divalent metal cation</name>
        <dbReference type="ChEBI" id="CHEBI:60240"/>
        <label>1</label>
    </ligand>
</feature>
<feature type="binding site" evidence="1">
    <location>
        <position position="185"/>
    </location>
    <ligand>
        <name>a divalent metal cation</name>
        <dbReference type="ChEBI" id="CHEBI:60240"/>
        <label>2</label>
    </ligand>
</feature>
<feature type="binding site" evidence="1">
    <location>
        <position position="226"/>
    </location>
    <ligand>
        <name>a divalent metal cation</name>
        <dbReference type="ChEBI" id="CHEBI:60240"/>
        <label>2</label>
    </ligand>
</feature>
<feature type="binding site" evidence="1">
    <location>
        <position position="277"/>
    </location>
    <ligand>
        <name>a divalent metal cation</name>
        <dbReference type="ChEBI" id="CHEBI:60240"/>
        <label>2</label>
    </ligand>
</feature>
<feature type="binding site" evidence="1">
    <location>
        <position position="327"/>
    </location>
    <ligand>
        <name>a divalent metal cation</name>
        <dbReference type="ChEBI" id="CHEBI:60240"/>
        <label>1</label>
    </ligand>
</feature>
<feature type="mutagenesis site" description="Reduces enzymatic activities by 50%." evidence="4">
    <original>E</original>
    <variation>A</variation>
    <location>
        <position position="185"/>
    </location>
</feature>
<feature type="mutagenesis site" description="Reduces enzymatic activities by 50%." evidence="4">
    <original>E</original>
    <variation>A</variation>
    <location>
        <position position="325"/>
    </location>
</feature>
<feature type="mutagenesis site" description="Reduces enzymatic activities by almost 95%." evidence="4">
    <original>D</original>
    <variation>A</variation>
    <location>
        <position position="327"/>
    </location>
</feature>
<feature type="sequence conflict" description="In Ref. 4; AAT92645." evidence="5" ref="4">
    <original>S</original>
    <variation>P</variation>
    <location>
        <position position="278"/>
    </location>
</feature>
<name>YBF5_YEAST</name>
<evidence type="ECO:0000250" key="1"/>
<evidence type="ECO:0000269" key="2">
    <source>
    </source>
</evidence>
<evidence type="ECO:0000269" key="3">
    <source>
    </source>
</evidence>
<evidence type="ECO:0000269" key="4">
    <source>
    </source>
</evidence>
<evidence type="ECO:0000305" key="5"/>
<comment type="function">
    <text evidence="4">Has both endo- and exonuclease activities. Incises double-stranded DNA without obvious specificity via its endonuclease activity and excises the DNA from the 3'-to 5'-end by its exonuclease activity. May have a role in apoptosis.</text>
</comment>
<comment type="cofactor">
    <cofactor evidence="4">
        <name>Mg(2+)</name>
        <dbReference type="ChEBI" id="CHEBI:18420"/>
    </cofactor>
    <text evidence="4">Divalent metal cations. Has optimal activity with Mg(2+).</text>
</comment>
<comment type="biophysicochemical properties">
    <phDependence>
        <text evidence="4">Optimum pH is 5.</text>
    </phDependence>
    <temperatureDependence>
        <text evidence="4">Optimum temperature is 30 degrees Celsius.</text>
    </temperatureDependence>
</comment>
<comment type="subcellular location">
    <subcellularLocation>
        <location evidence="2">Cytoplasm</location>
    </subcellularLocation>
</comment>
<comment type="miscellaneous">
    <text evidence="3">Present with 1460 molecules/cell in log phase SD medium.</text>
</comment>
<comment type="similarity">
    <text evidence="5">Belongs to the metallo-dependent hydrolases superfamily. TatD-type hydrolase family.</text>
</comment>
<accession>P34220</accession>
<accession>D6VPU5</accession>
<accession>Q6B2V4</accession>
<keyword id="KW-0963">Cytoplasm</keyword>
<keyword id="KW-0378">Hydrolase</keyword>
<keyword id="KW-0479">Metal-binding</keyword>
<keyword id="KW-0540">Nuclease</keyword>
<keyword id="KW-1185">Reference proteome</keyword>
<organism>
    <name type="scientific">Saccharomyces cerevisiae (strain ATCC 204508 / S288c)</name>
    <name type="common">Baker's yeast</name>
    <dbReference type="NCBI Taxonomy" id="559292"/>
    <lineage>
        <taxon>Eukaryota</taxon>
        <taxon>Fungi</taxon>
        <taxon>Dikarya</taxon>
        <taxon>Ascomycota</taxon>
        <taxon>Saccharomycotina</taxon>
        <taxon>Saccharomycetes</taxon>
        <taxon>Saccharomycetales</taxon>
        <taxon>Saccharomycetaceae</taxon>
        <taxon>Saccharomyces</taxon>
    </lineage>
</organism>